<accession>Q9HSG3</accession>
<proteinExistence type="inferred from homology"/>
<gene>
    <name evidence="1" type="primary">dcd</name>
    <name type="synonym">dtd</name>
    <name type="ordered locus">VNG_0245G</name>
</gene>
<feature type="chain" id="PRO_0000156028" description="dCTP deaminase, dUMP-forming">
    <location>
        <begin position="1"/>
        <end position="195"/>
    </location>
</feature>
<feature type="region of interest" description="Disordered" evidence="2">
    <location>
        <begin position="161"/>
        <end position="195"/>
    </location>
</feature>
<feature type="compositionally biased region" description="Basic and acidic residues" evidence="2">
    <location>
        <begin position="165"/>
        <end position="176"/>
    </location>
</feature>
<feature type="compositionally biased region" description="Basic and acidic residues" evidence="2">
    <location>
        <begin position="185"/>
        <end position="195"/>
    </location>
</feature>
<feature type="active site" description="Proton donor/acceptor" evidence="1">
    <location>
        <position position="133"/>
    </location>
</feature>
<feature type="binding site" evidence="1">
    <location>
        <begin position="105"/>
        <end position="110"/>
    </location>
    <ligand>
        <name>dCTP</name>
        <dbReference type="ChEBI" id="CHEBI:61481"/>
    </ligand>
</feature>
<feature type="binding site" evidence="1">
    <location>
        <position position="123"/>
    </location>
    <ligand>
        <name>dCTP</name>
        <dbReference type="ChEBI" id="CHEBI:61481"/>
    </ligand>
</feature>
<feature type="binding site" evidence="1">
    <location>
        <begin position="131"/>
        <end position="133"/>
    </location>
    <ligand>
        <name>dCTP</name>
        <dbReference type="ChEBI" id="CHEBI:61481"/>
    </ligand>
</feature>
<feature type="binding site" evidence="1">
    <location>
        <position position="152"/>
    </location>
    <ligand>
        <name>dCTP</name>
        <dbReference type="ChEBI" id="CHEBI:61481"/>
    </ligand>
</feature>
<feature type="binding site" evidence="1">
    <location>
        <position position="166"/>
    </location>
    <ligand>
        <name>dCTP</name>
        <dbReference type="ChEBI" id="CHEBI:61481"/>
    </ligand>
</feature>
<feature type="binding site" evidence="1">
    <location>
        <position position="173"/>
    </location>
    <ligand>
        <name>dCTP</name>
        <dbReference type="ChEBI" id="CHEBI:61481"/>
    </ligand>
</feature>
<feature type="binding site" evidence="1">
    <location>
        <position position="177"/>
    </location>
    <ligand>
        <name>dCTP</name>
        <dbReference type="ChEBI" id="CHEBI:61481"/>
    </ligand>
</feature>
<feature type="site" description="Important for bifunctional activity" evidence="1">
    <location>
        <begin position="120"/>
        <end position="121"/>
    </location>
</feature>
<reference key="1">
    <citation type="journal article" date="2000" name="Proc. Natl. Acad. Sci. U.S.A.">
        <title>Genome sequence of Halobacterium species NRC-1.</title>
        <authorList>
            <person name="Ng W.V."/>
            <person name="Kennedy S.P."/>
            <person name="Mahairas G.G."/>
            <person name="Berquist B."/>
            <person name="Pan M."/>
            <person name="Shukla H.D."/>
            <person name="Lasky S.R."/>
            <person name="Baliga N.S."/>
            <person name="Thorsson V."/>
            <person name="Sbrogna J."/>
            <person name="Swartzell S."/>
            <person name="Weir D."/>
            <person name="Hall J."/>
            <person name="Dahl T.A."/>
            <person name="Welti R."/>
            <person name="Goo Y.A."/>
            <person name="Leithauser B."/>
            <person name="Keller K."/>
            <person name="Cruz R."/>
            <person name="Danson M.J."/>
            <person name="Hough D.W."/>
            <person name="Maddocks D.G."/>
            <person name="Jablonski P.E."/>
            <person name="Krebs M.P."/>
            <person name="Angevine C.M."/>
            <person name="Dale H."/>
            <person name="Isenbarger T.A."/>
            <person name="Peck R.F."/>
            <person name="Pohlschroder M."/>
            <person name="Spudich J.L."/>
            <person name="Jung K.-H."/>
            <person name="Alam M."/>
            <person name="Freitas T."/>
            <person name="Hou S."/>
            <person name="Daniels C.J."/>
            <person name="Dennis P.P."/>
            <person name="Omer A.D."/>
            <person name="Ebhardt H."/>
            <person name="Lowe T.M."/>
            <person name="Liang P."/>
            <person name="Riley M."/>
            <person name="Hood L."/>
            <person name="DasSarma S."/>
        </authorList>
    </citation>
    <scope>NUCLEOTIDE SEQUENCE [LARGE SCALE GENOMIC DNA]</scope>
    <source>
        <strain>ATCC 700922 / JCM 11081 / NRC-1</strain>
    </source>
</reference>
<evidence type="ECO:0000255" key="1">
    <source>
        <dbReference type="HAMAP-Rule" id="MF_00146"/>
    </source>
</evidence>
<evidence type="ECO:0000256" key="2">
    <source>
        <dbReference type="SAM" id="MobiDB-lite"/>
    </source>
</evidence>
<name>DCDB_HALSA</name>
<keyword id="KW-0378">Hydrolase</keyword>
<keyword id="KW-0546">Nucleotide metabolism</keyword>
<keyword id="KW-0547">Nucleotide-binding</keyword>
<keyword id="KW-1185">Reference proteome</keyword>
<organism>
    <name type="scientific">Halobacterium salinarum (strain ATCC 700922 / JCM 11081 / NRC-1)</name>
    <name type="common">Halobacterium halobium</name>
    <dbReference type="NCBI Taxonomy" id="64091"/>
    <lineage>
        <taxon>Archaea</taxon>
        <taxon>Methanobacteriati</taxon>
        <taxon>Methanobacteriota</taxon>
        <taxon>Stenosarchaea group</taxon>
        <taxon>Halobacteria</taxon>
        <taxon>Halobacteriales</taxon>
        <taxon>Halobacteriaceae</taxon>
        <taxon>Halobacterium</taxon>
        <taxon>Halobacterium salinarum NRC-34001</taxon>
    </lineage>
</organism>
<comment type="function">
    <text evidence="1">Bifunctional enzyme that catalyzes both the deamination of dCTP to dUTP and the hydrolysis of dUTP to dUMP without releasing the toxic dUTP intermediate.</text>
</comment>
<comment type="catalytic activity">
    <reaction evidence="1">
        <text>dCTP + 2 H2O = dUMP + NH4(+) + diphosphate</text>
        <dbReference type="Rhea" id="RHEA:19205"/>
        <dbReference type="ChEBI" id="CHEBI:15377"/>
        <dbReference type="ChEBI" id="CHEBI:28938"/>
        <dbReference type="ChEBI" id="CHEBI:33019"/>
        <dbReference type="ChEBI" id="CHEBI:61481"/>
        <dbReference type="ChEBI" id="CHEBI:246422"/>
        <dbReference type="EC" id="3.5.4.30"/>
    </reaction>
</comment>
<comment type="pathway">
    <text evidence="1">Pyrimidine metabolism; dUMP biosynthesis; dUMP from dCTP: step 1/1.</text>
</comment>
<comment type="subunit">
    <text evidence="1">Homotrimer.</text>
</comment>
<comment type="similarity">
    <text evidence="1">Belongs to the dCTP deaminase family.</text>
</comment>
<dbReference type="EC" id="3.5.4.30" evidence="1"/>
<dbReference type="EMBL" id="AE004437">
    <property type="protein sequence ID" value="AAG18843.1"/>
    <property type="molecule type" value="Genomic_DNA"/>
</dbReference>
<dbReference type="PIR" id="G84184">
    <property type="entry name" value="G84184"/>
</dbReference>
<dbReference type="RefSeq" id="WP_010902137.1">
    <property type="nucleotide sequence ID" value="NC_002607.1"/>
</dbReference>
<dbReference type="SMR" id="Q9HSG3"/>
<dbReference type="FunCoup" id="Q9HSG3">
    <property type="interactions" value="18"/>
</dbReference>
<dbReference type="STRING" id="64091.VNG_0245G"/>
<dbReference type="PaxDb" id="64091-VNG_0245G"/>
<dbReference type="GeneID" id="89348798"/>
<dbReference type="KEGG" id="hal:VNG_0245G"/>
<dbReference type="PATRIC" id="fig|64091.14.peg.178"/>
<dbReference type="HOGENOM" id="CLU_087476_2_1_2"/>
<dbReference type="InParanoid" id="Q9HSG3"/>
<dbReference type="OrthoDB" id="33242at2157"/>
<dbReference type="PhylomeDB" id="Q9HSG3"/>
<dbReference type="UniPathway" id="UPA00610">
    <property type="reaction ID" value="UER00667"/>
</dbReference>
<dbReference type="Proteomes" id="UP000000554">
    <property type="component" value="Chromosome"/>
</dbReference>
<dbReference type="GO" id="GO:0033973">
    <property type="term" value="F:dCTP deaminase (dUMP-forming) activity"/>
    <property type="evidence" value="ECO:0007669"/>
    <property type="project" value="UniProtKB-UniRule"/>
</dbReference>
<dbReference type="GO" id="GO:0008829">
    <property type="term" value="F:dCTP deaminase activity"/>
    <property type="evidence" value="ECO:0000318"/>
    <property type="project" value="GO_Central"/>
</dbReference>
<dbReference type="GO" id="GO:0000166">
    <property type="term" value="F:nucleotide binding"/>
    <property type="evidence" value="ECO:0007669"/>
    <property type="project" value="UniProtKB-KW"/>
</dbReference>
<dbReference type="GO" id="GO:0006226">
    <property type="term" value="P:dUMP biosynthetic process"/>
    <property type="evidence" value="ECO:0007669"/>
    <property type="project" value="UniProtKB-UniRule"/>
</dbReference>
<dbReference type="GO" id="GO:0006229">
    <property type="term" value="P:dUTP biosynthetic process"/>
    <property type="evidence" value="ECO:0007669"/>
    <property type="project" value="InterPro"/>
</dbReference>
<dbReference type="GO" id="GO:0015949">
    <property type="term" value="P:nucleobase-containing small molecule interconversion"/>
    <property type="evidence" value="ECO:0000318"/>
    <property type="project" value="GO_Central"/>
</dbReference>
<dbReference type="CDD" id="cd07557">
    <property type="entry name" value="trimeric_dUTPase"/>
    <property type="match status" value="1"/>
</dbReference>
<dbReference type="FunFam" id="2.70.40.10:FF:000005">
    <property type="entry name" value="dCTP deaminase, dUMP-forming"/>
    <property type="match status" value="1"/>
</dbReference>
<dbReference type="Gene3D" id="2.70.40.10">
    <property type="match status" value="1"/>
</dbReference>
<dbReference type="HAMAP" id="MF_00146">
    <property type="entry name" value="dCTP_deaminase"/>
    <property type="match status" value="1"/>
</dbReference>
<dbReference type="InterPro" id="IPR011962">
    <property type="entry name" value="dCTP_deaminase"/>
</dbReference>
<dbReference type="InterPro" id="IPR036157">
    <property type="entry name" value="dUTPase-like_sf"/>
</dbReference>
<dbReference type="InterPro" id="IPR033704">
    <property type="entry name" value="dUTPase_trimeric"/>
</dbReference>
<dbReference type="NCBIfam" id="TIGR02274">
    <property type="entry name" value="dCTP_deam"/>
    <property type="match status" value="1"/>
</dbReference>
<dbReference type="PANTHER" id="PTHR42680">
    <property type="entry name" value="DCTP DEAMINASE"/>
    <property type="match status" value="1"/>
</dbReference>
<dbReference type="PANTHER" id="PTHR42680:SF3">
    <property type="entry name" value="DCTP DEAMINASE"/>
    <property type="match status" value="1"/>
</dbReference>
<dbReference type="Pfam" id="PF22769">
    <property type="entry name" value="DCD"/>
    <property type="match status" value="1"/>
</dbReference>
<dbReference type="SUPFAM" id="SSF51283">
    <property type="entry name" value="dUTPase-like"/>
    <property type="match status" value="1"/>
</dbReference>
<protein>
    <recommendedName>
        <fullName evidence="1">dCTP deaminase, dUMP-forming</fullName>
        <ecNumber evidence="1">3.5.4.30</ecNumber>
    </recommendedName>
    <alternativeName>
        <fullName evidence="1">Bifunctional dCTP deaminase:dUTPase</fullName>
    </alternativeName>
    <alternativeName>
        <fullName evidence="1">DCD-DUT</fullName>
    </alternativeName>
</protein>
<sequence>MILSDQDILARLADGDLAIEPLEDVDLQVQPASVDVRLGRRFLEFERANVPCIHPNREDEVDEYVTETVVEDGDEFILHPGDFVLGTTKERVEVPRDLVAQVEGRSSLGRLAVVVHATAGFIDPGFNGRVTLELSNLGKVPVALTPEMRISQLVFTELTSPADRPYGDERGSKYQDQDGPQASRIRGDREFGGTQ</sequence>